<organism>
    <name type="scientific">Homo sapiens</name>
    <name type="common">Human</name>
    <dbReference type="NCBI Taxonomy" id="9606"/>
    <lineage>
        <taxon>Eukaryota</taxon>
        <taxon>Metazoa</taxon>
        <taxon>Chordata</taxon>
        <taxon>Craniata</taxon>
        <taxon>Vertebrata</taxon>
        <taxon>Euteleostomi</taxon>
        <taxon>Mammalia</taxon>
        <taxon>Eutheria</taxon>
        <taxon>Euarchontoglires</taxon>
        <taxon>Primates</taxon>
        <taxon>Haplorrhini</taxon>
        <taxon>Catarrhini</taxon>
        <taxon>Hominidae</taxon>
        <taxon>Homo</taxon>
    </lineage>
</organism>
<keyword id="KW-0025">Alternative splicing</keyword>
<keyword id="KW-1015">Disulfide bond</keyword>
<keyword id="KW-0887">Epilepsy</keyword>
<keyword id="KW-0325">Glycoprotein</keyword>
<keyword id="KW-0328">Glycosyltransferase</keyword>
<keyword id="KW-0333">Golgi apparatus</keyword>
<keyword id="KW-0991">Intellectual disability</keyword>
<keyword id="KW-0443">Lipid metabolism</keyword>
<keyword id="KW-0472">Membrane</keyword>
<keyword id="KW-1267">Proteomics identification</keyword>
<keyword id="KW-1185">Reference proteome</keyword>
<keyword id="KW-0735">Signal-anchor</keyword>
<keyword id="KW-0808">Transferase</keyword>
<keyword id="KW-0812">Transmembrane</keyword>
<keyword id="KW-1133">Transmembrane helix</keyword>
<evidence type="ECO:0000250" key="1"/>
<evidence type="ECO:0000255" key="2"/>
<evidence type="ECO:0000256" key="3">
    <source>
        <dbReference type="SAM" id="MobiDB-lite"/>
    </source>
</evidence>
<evidence type="ECO:0000269" key="4">
    <source>
    </source>
</evidence>
<evidence type="ECO:0000269" key="5">
    <source>
    </source>
</evidence>
<evidence type="ECO:0000269" key="6">
    <source>
    </source>
</evidence>
<evidence type="ECO:0000269" key="7">
    <source>
    </source>
</evidence>
<evidence type="ECO:0000269" key="8">
    <source ref="2"/>
</evidence>
<evidence type="ECO:0000303" key="9">
    <source>
    </source>
</evidence>
<evidence type="ECO:0000303" key="10">
    <source>
    </source>
</evidence>
<evidence type="ECO:0000303" key="11">
    <source ref="3"/>
</evidence>
<evidence type="ECO:0000305" key="12"/>
<evidence type="ECO:0000305" key="13">
    <source>
    </source>
</evidence>
<evidence type="ECO:0000305" key="14">
    <source>
    </source>
</evidence>
<proteinExistence type="evidence at protein level"/>
<feature type="chain" id="PRO_0000149302" description="Lactosylceramide alpha-2,3-sialyltransferase">
    <location>
        <begin position="1"/>
        <end position="418"/>
    </location>
</feature>
<feature type="topological domain" description="Cytoplasmic" evidence="2">
    <location>
        <begin position="1"/>
        <end position="61"/>
    </location>
</feature>
<feature type="transmembrane region" description="Helical; Signal-anchor for type II membrane protein" evidence="2">
    <location>
        <begin position="62"/>
        <end position="82"/>
    </location>
</feature>
<feature type="topological domain" description="Lumenal" evidence="2">
    <location>
        <begin position="83"/>
        <end position="418"/>
    </location>
</feature>
<feature type="region of interest" description="Disordered" evidence="3">
    <location>
        <begin position="1"/>
        <end position="25"/>
    </location>
</feature>
<feature type="glycosylation site" description="N-linked (GlcNAc...) asparagine" evidence="2">
    <location>
        <position position="86"/>
    </location>
</feature>
<feature type="glycosylation site" description="N-linked (GlcNAc...) asparagine" evidence="2">
    <location>
        <position position="236"/>
    </location>
</feature>
<feature type="glycosylation site" description="N-linked (GlcNAc...) asparagine" evidence="2">
    <location>
        <position position="390"/>
    </location>
</feature>
<feature type="disulfide bond" evidence="1">
    <location>
        <begin position="195"/>
        <end position="353"/>
    </location>
</feature>
<feature type="splice variant" id="VSP_033686" description="In isoform 2." evidence="11">
    <location>
        <begin position="1"/>
        <end position="28"/>
    </location>
</feature>
<feature type="splice variant" id="VSP_033687" description="In isoform 3." evidence="9">
    <location>
        <begin position="1"/>
        <end position="23"/>
    </location>
</feature>
<feature type="splice variant" id="VSP_033688" description="In isoform 3." evidence="9">
    <original>PAGRA</original>
    <variation>MASVP</variation>
    <location>
        <begin position="24"/>
        <end position="28"/>
    </location>
</feature>
<feature type="sequence variant" id="VAR_025510" description="In dbSNP:rs1138484." evidence="4 7 8">
    <original>H</original>
    <variation>R</variation>
    <location>
        <position position="104"/>
    </location>
</feature>
<protein>
    <recommendedName>
        <fullName>Lactosylceramide alpha-2,3-sialyltransferase</fullName>
        <ecNumber evidence="6 7">2.4.3.9</ecNumber>
    </recommendedName>
    <alternativeName>
        <fullName>CMP-NeuAc:lactosylceramide alpha-2,3-sialyltransferase</fullName>
    </alternativeName>
    <alternativeName>
        <fullName evidence="9">GM3 synthase</fullName>
    </alternativeName>
    <alternativeName>
        <fullName evidence="10">Ganglioside GM3 synthase</fullName>
    </alternativeName>
    <alternativeName>
        <fullName>ST3Gal V</fullName>
        <shortName>ST3GalV</shortName>
    </alternativeName>
    <alternativeName>
        <fullName>Sialyltransferase 9</fullName>
    </alternativeName>
</protein>
<dbReference type="EC" id="2.4.3.9" evidence="6 7"/>
<dbReference type="EMBL" id="AB018356">
    <property type="protein sequence ID" value="BAA33950.1"/>
    <property type="status" value="ALT_INIT"/>
    <property type="molecule type" value="mRNA"/>
</dbReference>
<dbReference type="EMBL" id="AF119415">
    <property type="protein sequence ID" value="AAF66146.1"/>
    <property type="status" value="ALT_INIT"/>
    <property type="molecule type" value="mRNA"/>
</dbReference>
<dbReference type="EMBL" id="AY152815">
    <property type="protein sequence ID" value="AAO16866.2"/>
    <property type="molecule type" value="mRNA"/>
</dbReference>
<dbReference type="EMBL" id="AF105026">
    <property type="protein sequence ID" value="AAD14634.1"/>
    <property type="status" value="ALT_INIT"/>
    <property type="molecule type" value="mRNA"/>
</dbReference>
<dbReference type="EMBL" id="AK001340">
    <property type="protein sequence ID" value="BAG50894.1"/>
    <property type="molecule type" value="mRNA"/>
</dbReference>
<dbReference type="EMBL" id="AC105053">
    <property type="protein sequence ID" value="AAY24147.1"/>
    <property type="status" value="ALT_SEQ"/>
    <property type="molecule type" value="Genomic_DNA"/>
</dbReference>
<dbReference type="EMBL" id="CH471053">
    <property type="protein sequence ID" value="EAW99475.1"/>
    <property type="molecule type" value="Genomic_DNA"/>
</dbReference>
<dbReference type="EMBL" id="CH471053">
    <property type="protein sequence ID" value="EAW99479.1"/>
    <property type="molecule type" value="Genomic_DNA"/>
</dbReference>
<dbReference type="EMBL" id="BC065936">
    <property type="protein sequence ID" value="AAH65936.2"/>
    <property type="molecule type" value="mRNA"/>
</dbReference>
<dbReference type="EMBL" id="AY359105">
    <property type="protein sequence ID" value="AAQ89463.1"/>
    <property type="status" value="ALT_INIT"/>
    <property type="molecule type" value="mRNA"/>
</dbReference>
<dbReference type="CCDS" id="CCDS1986.2">
    <molecule id="Q9UNP4-1"/>
</dbReference>
<dbReference type="CCDS" id="CCDS42705.1">
    <molecule id="Q9UNP4-3"/>
</dbReference>
<dbReference type="CCDS" id="CCDS86856.1">
    <molecule id="Q9UNP4-2"/>
</dbReference>
<dbReference type="RefSeq" id="NP_001035902.1">
    <molecule id="Q9UNP4-3"/>
    <property type="nucleotide sequence ID" value="NM_001042437.2"/>
</dbReference>
<dbReference type="RefSeq" id="NP_001341156.1">
    <molecule id="Q9UNP4-2"/>
    <property type="nucleotide sequence ID" value="NM_001354227.2"/>
</dbReference>
<dbReference type="RefSeq" id="NP_001341158.1">
    <molecule id="Q9UNP4-2"/>
    <property type="nucleotide sequence ID" value="NM_001354229.2"/>
</dbReference>
<dbReference type="RefSeq" id="NP_001341167.1">
    <molecule id="Q9UNP4-2"/>
    <property type="nucleotide sequence ID" value="NM_001354238.1"/>
</dbReference>
<dbReference type="RefSeq" id="NP_003887.3">
    <molecule id="Q9UNP4-1"/>
    <property type="nucleotide sequence ID" value="NM_003896.3"/>
</dbReference>
<dbReference type="RefSeq" id="XP_047302193.1">
    <molecule id="Q9UNP4-2"/>
    <property type="nucleotide sequence ID" value="XM_047446237.1"/>
</dbReference>
<dbReference type="SMR" id="Q9UNP4"/>
<dbReference type="BioGRID" id="114389">
    <property type="interactions" value="17"/>
</dbReference>
<dbReference type="FunCoup" id="Q9UNP4">
    <property type="interactions" value="530"/>
</dbReference>
<dbReference type="IntAct" id="Q9UNP4">
    <property type="interactions" value="13"/>
</dbReference>
<dbReference type="STRING" id="9606.ENSP00000491316"/>
<dbReference type="DrugBank" id="DB05867">
    <property type="generic name" value="99mTc-14 F7 Mab"/>
</dbReference>
<dbReference type="DrugBank" id="DB04339">
    <property type="generic name" value="Carbocisteine"/>
</dbReference>
<dbReference type="SwissLipids" id="SLP:000000751">
    <molecule id="Q9UNP4-3"/>
</dbReference>
<dbReference type="SwissLipids" id="SLP:000000776"/>
<dbReference type="SwissLipids" id="SLP:000000868"/>
<dbReference type="SwissLipids" id="SLP:000000877">
    <molecule id="Q9UNP4-3"/>
</dbReference>
<dbReference type="CAZy" id="GT29">
    <property type="family name" value="Glycosyltransferase Family 29"/>
</dbReference>
<dbReference type="GlyCosmos" id="Q9UNP4">
    <property type="glycosylation" value="3 sites, No reported glycans"/>
</dbReference>
<dbReference type="GlyGen" id="Q9UNP4">
    <property type="glycosylation" value="3 sites, 2 N-linked glycans (2 sites)"/>
</dbReference>
<dbReference type="iPTMnet" id="Q9UNP4"/>
<dbReference type="PhosphoSitePlus" id="Q9UNP4"/>
<dbReference type="SwissPalm" id="Q9UNP4"/>
<dbReference type="BioMuta" id="ST3GAL5"/>
<dbReference type="DMDM" id="189047140"/>
<dbReference type="jPOST" id="Q9UNP4"/>
<dbReference type="MassIVE" id="Q9UNP4"/>
<dbReference type="PaxDb" id="9606-ENSP00000366549"/>
<dbReference type="PeptideAtlas" id="Q9UNP4"/>
<dbReference type="ProteomicsDB" id="85318">
    <molecule id="Q9UNP4-1"/>
</dbReference>
<dbReference type="ProteomicsDB" id="85319">
    <molecule id="Q9UNP4-2"/>
</dbReference>
<dbReference type="ProteomicsDB" id="85320">
    <molecule id="Q9UNP4-3"/>
</dbReference>
<dbReference type="Antibodypedia" id="31972">
    <property type="antibodies" value="163 antibodies from 25 providers"/>
</dbReference>
<dbReference type="DNASU" id="8869"/>
<dbReference type="Ensembl" id="ENST00000393805.6">
    <molecule id="Q9UNP4-2"/>
    <property type="protein sequence ID" value="ENSP00000377394.1"/>
    <property type="gene ID" value="ENSG00000115525.18"/>
</dbReference>
<dbReference type="Ensembl" id="ENST00000393808.8">
    <molecule id="Q9UNP4-3"/>
    <property type="protein sequence ID" value="ENSP00000377397.3"/>
    <property type="gene ID" value="ENSG00000115525.18"/>
</dbReference>
<dbReference type="Ensembl" id="ENST00000638572.2">
    <molecule id="Q9UNP4-1"/>
    <property type="protein sequence ID" value="ENSP00000491316.1"/>
    <property type="gene ID" value="ENSG00000115525.18"/>
</dbReference>
<dbReference type="Ensembl" id="ENST00000638986.1">
    <molecule id="Q9UNP4-2"/>
    <property type="protein sequence ID" value="ENSP00000491853.1"/>
    <property type="gene ID" value="ENSG00000115525.18"/>
</dbReference>
<dbReference type="Ensembl" id="ENST00000639432.1">
    <molecule id="Q9UNP4-2"/>
    <property type="protein sequence ID" value="ENSP00000491828.1"/>
    <property type="gene ID" value="ENSG00000115525.18"/>
</dbReference>
<dbReference type="Ensembl" id="ENST00000640322.1">
    <molecule id="Q9UNP4-2"/>
    <property type="protein sequence ID" value="ENSP00000491564.1"/>
    <property type="gene ID" value="ENSG00000115525.18"/>
</dbReference>
<dbReference type="Ensembl" id="ENST00000640982.1">
    <molecule id="Q9UNP4-2"/>
    <property type="protein sequence ID" value="ENSP00000492299.1"/>
    <property type="gene ID" value="ENSG00000115525.18"/>
</dbReference>
<dbReference type="Ensembl" id="ENST00000640992.1">
    <molecule id="Q9UNP4-2"/>
    <property type="protein sequence ID" value="ENSP00000492753.1"/>
    <property type="gene ID" value="ENSG00000115525.18"/>
</dbReference>
<dbReference type="GeneID" id="8869"/>
<dbReference type="KEGG" id="hsa:8869"/>
<dbReference type="MANE-Select" id="ENST00000638572.2">
    <property type="protein sequence ID" value="ENSP00000491316.1"/>
    <property type="RefSeq nucleotide sequence ID" value="NM_003896.4"/>
    <property type="RefSeq protein sequence ID" value="NP_003887.3"/>
</dbReference>
<dbReference type="UCSC" id="uc002sqp.2">
    <molecule id="Q9UNP4-1"/>
    <property type="organism name" value="human"/>
</dbReference>
<dbReference type="AGR" id="HGNC:10872"/>
<dbReference type="CTD" id="8869"/>
<dbReference type="DisGeNET" id="8869"/>
<dbReference type="GeneCards" id="ST3GAL5"/>
<dbReference type="GeneReviews" id="ST3GAL5"/>
<dbReference type="HGNC" id="HGNC:10872">
    <property type="gene designation" value="ST3GAL5"/>
</dbReference>
<dbReference type="HPA" id="ENSG00000115525">
    <property type="expression patterns" value="Low tissue specificity"/>
</dbReference>
<dbReference type="MalaCards" id="ST3GAL5"/>
<dbReference type="MIM" id="604402">
    <property type="type" value="gene"/>
</dbReference>
<dbReference type="MIM" id="609056">
    <property type="type" value="phenotype"/>
</dbReference>
<dbReference type="neXtProt" id="NX_Q9UNP4"/>
<dbReference type="OpenTargets" id="ENSG00000115525"/>
<dbReference type="Orphanet" id="370933">
    <property type="disease" value="GM3 synthase deficiency"/>
</dbReference>
<dbReference type="PharmGKB" id="PA35773"/>
<dbReference type="VEuPathDB" id="HostDB:ENSG00000115525"/>
<dbReference type="eggNOG" id="KOG2692">
    <property type="taxonomic scope" value="Eukaryota"/>
</dbReference>
<dbReference type="GeneTree" id="ENSGT00940000157929"/>
<dbReference type="HOGENOM" id="CLU_032020_3_2_1"/>
<dbReference type="InParanoid" id="Q9UNP4"/>
<dbReference type="OMA" id="MHYVDPE"/>
<dbReference type="OrthoDB" id="10264956at2759"/>
<dbReference type="PAN-GO" id="Q9UNP4">
    <property type="GO annotations" value="2 GO annotations based on evolutionary models"/>
</dbReference>
<dbReference type="PhylomeDB" id="Q9UNP4"/>
<dbReference type="TreeFam" id="TF352819"/>
<dbReference type="BioCyc" id="MetaCyc:HS03904-MONOMER"/>
<dbReference type="BRENDA" id="2.4.99.9">
    <property type="organism ID" value="2681"/>
</dbReference>
<dbReference type="PathwayCommons" id="Q9UNP4"/>
<dbReference type="Reactome" id="R-HSA-4085001">
    <property type="pathway name" value="Sialic acid metabolism"/>
</dbReference>
<dbReference type="Reactome" id="R-HSA-9840309">
    <property type="pathway name" value="Glycosphingolipid biosynthesis"/>
</dbReference>
<dbReference type="SignaLink" id="Q9UNP4"/>
<dbReference type="SIGNOR" id="Q9UNP4"/>
<dbReference type="BioGRID-ORCS" id="8869">
    <property type="hits" value="20 hits in 1167 CRISPR screens"/>
</dbReference>
<dbReference type="ChiTaRS" id="ST3GAL5">
    <property type="organism name" value="human"/>
</dbReference>
<dbReference type="GeneWiki" id="ST3GAL5"/>
<dbReference type="GenomeRNAi" id="8869"/>
<dbReference type="Pharos" id="Q9UNP4">
    <property type="development level" value="Tbio"/>
</dbReference>
<dbReference type="PRO" id="PR:Q9UNP4"/>
<dbReference type="Proteomes" id="UP000005640">
    <property type="component" value="Chromosome 2"/>
</dbReference>
<dbReference type="RNAct" id="Q9UNP4">
    <property type="molecule type" value="protein"/>
</dbReference>
<dbReference type="Bgee" id="ENSG00000115525">
    <property type="expression patterns" value="Expressed in right adrenal gland and 180 other cell types or tissues"/>
</dbReference>
<dbReference type="ExpressionAtlas" id="Q9UNP4">
    <property type="expression patterns" value="baseline and differential"/>
</dbReference>
<dbReference type="GO" id="GO:0000139">
    <property type="term" value="C:Golgi membrane"/>
    <property type="evidence" value="ECO:0000304"/>
    <property type="project" value="Reactome"/>
</dbReference>
<dbReference type="GO" id="GO:0016020">
    <property type="term" value="C:membrane"/>
    <property type="evidence" value="ECO:0000304"/>
    <property type="project" value="ProtInc"/>
</dbReference>
<dbReference type="GO" id="GO:0003836">
    <property type="term" value="F:beta-galactoside (CMP) alpha-2,3-sialyltransferase activity"/>
    <property type="evidence" value="ECO:0000304"/>
    <property type="project" value="Reactome"/>
</dbReference>
<dbReference type="GO" id="GO:0047291">
    <property type="term" value="F:lactosylceramide alpha-2,3-sialyltransferase activity"/>
    <property type="evidence" value="ECO:0000314"/>
    <property type="project" value="UniProtKB"/>
</dbReference>
<dbReference type="GO" id="GO:0008373">
    <property type="term" value="F:sialyltransferase activity"/>
    <property type="evidence" value="ECO:0000304"/>
    <property type="project" value="ProtInc"/>
</dbReference>
<dbReference type="GO" id="GO:0001574">
    <property type="term" value="P:ganglioside biosynthetic process"/>
    <property type="evidence" value="ECO:0000305"/>
    <property type="project" value="UniProtKB"/>
</dbReference>
<dbReference type="GO" id="GO:0006688">
    <property type="term" value="P:glycosphingolipid biosynthetic process"/>
    <property type="evidence" value="ECO:0000304"/>
    <property type="project" value="Reactome"/>
</dbReference>
<dbReference type="GO" id="GO:0006486">
    <property type="term" value="P:protein glycosylation"/>
    <property type="evidence" value="ECO:0000318"/>
    <property type="project" value="GO_Central"/>
</dbReference>
<dbReference type="CDD" id="cd23983">
    <property type="entry name" value="GT29_ST3GAL5"/>
    <property type="match status" value="1"/>
</dbReference>
<dbReference type="FunFam" id="3.90.1480.20:FF:000006">
    <property type="entry name" value="ST3 beta-galactoside alpha-2,3-sialyltransferase 5"/>
    <property type="match status" value="1"/>
</dbReference>
<dbReference type="Gene3D" id="3.90.1480.20">
    <property type="entry name" value="Glycosyl transferase family 29"/>
    <property type="match status" value="1"/>
</dbReference>
<dbReference type="InterPro" id="IPR001675">
    <property type="entry name" value="Glyco_trans_29"/>
</dbReference>
<dbReference type="InterPro" id="IPR051142">
    <property type="entry name" value="Glycosyltransferase_29"/>
</dbReference>
<dbReference type="InterPro" id="IPR038578">
    <property type="entry name" value="GT29-like_sf"/>
</dbReference>
<dbReference type="InterPro" id="IPR012163">
    <property type="entry name" value="Sialyl_trans"/>
</dbReference>
<dbReference type="PANTHER" id="PTHR13713:SF60">
    <property type="entry name" value="LACTOSYLCERAMIDE ALPHA-2,3-SIALYLTRANSFERASE"/>
    <property type="match status" value="1"/>
</dbReference>
<dbReference type="PANTHER" id="PTHR13713">
    <property type="entry name" value="SIALYLTRANSFERASE"/>
    <property type="match status" value="1"/>
</dbReference>
<dbReference type="Pfam" id="PF00777">
    <property type="entry name" value="Glyco_transf_29"/>
    <property type="match status" value="1"/>
</dbReference>
<dbReference type="PIRSF" id="PIRSF005557">
    <property type="entry name" value="Sialyl_trans"/>
    <property type="match status" value="1"/>
</dbReference>
<reference key="1">
    <citation type="journal article" date="1998" name="J. Biol. Chem.">
        <title>Expression cloning and functional characterization of human cDNA for ganglioside GM3 synthase.</title>
        <authorList>
            <person name="Ishii A."/>
            <person name="Ohta M."/>
            <person name="Watanabe Y."/>
            <person name="Matsuda K."/>
            <person name="Ishiyama K."/>
            <person name="Sakoe K."/>
            <person name="Nakamura M."/>
            <person name="Inokuchi J."/>
            <person name="Sanai Y."/>
            <person name="Saito M."/>
        </authorList>
    </citation>
    <scope>NUCLEOTIDE SEQUENCE [MRNA] (ISOFORM 1)</scope>
    <scope>VARIANT ARG-104</scope>
    <scope>CHARACTERIZATION</scope>
    <scope>FUNCTION</scope>
    <scope>CATALYTIC ACTIVITY</scope>
    <scope>TISSUE SPECIFICITY</scope>
</reference>
<reference key="2">
    <citation type="thesis" date="1999" institute="Medical College of Viriginia" country="United States">
        <title>Molecular cloning and expression of ceramide galactosyltransferases. Comparison with other glycosyltransferases.</title>
        <authorList>
            <person name="Kapitonov D."/>
        </authorList>
    </citation>
    <scope>NUCLEOTIDE SEQUENCE [MRNA] (ISOFORM 1)</scope>
    <scope>VARIANT ARG-104</scope>
    <source>
        <tissue>Brain</tissue>
    </source>
</reference>
<reference key="3">
    <citation type="submission" date="1998-11" db="EMBL/GenBank/DDBJ databases">
        <title>Molecular cloning of CMP-NeuAc:lactosylceramide alpha-2,3-sialyltransferase cDNA from human fetal brain.</title>
        <authorList>
            <person name="Kim K.-W."/>
            <person name="Kim K.-S."/>
            <person name="Do S.-I."/>
            <person name="Kim C.-H."/>
            <person name="Lee Y.-C."/>
        </authorList>
    </citation>
    <scope>NUCLEOTIDE SEQUENCE [MRNA] (ISOFORM 2)</scope>
    <source>
        <tissue>Fetal brain</tissue>
    </source>
</reference>
<reference key="4">
    <citation type="journal article" date="2006" name="Biochim. Biophys. Acta">
        <title>Human GM3 synthase: a new mRNA variant encodes an NH2-terminal extended form of the protein.</title>
        <authorList>
            <person name="Berselli P."/>
            <person name="Zava S."/>
            <person name="Sottocornola E."/>
            <person name="Milani S."/>
            <person name="Berra B."/>
            <person name="Colombo I."/>
        </authorList>
    </citation>
    <scope>NUCLEOTIDE SEQUENCE [MRNA] (ISOFORM 3)</scope>
    <scope>FUNCTION</scope>
    <scope>CATALYTIC ACTIVITY</scope>
    <scope>GLYCOSYLATION</scope>
    <source>
        <tissue>Placenta</tissue>
    </source>
</reference>
<reference key="5">
    <citation type="journal article" date="2004" name="Nat. Genet.">
        <title>Complete sequencing and characterization of 21,243 full-length human cDNAs.</title>
        <authorList>
            <person name="Ota T."/>
            <person name="Suzuki Y."/>
            <person name="Nishikawa T."/>
            <person name="Otsuki T."/>
            <person name="Sugiyama T."/>
            <person name="Irie R."/>
            <person name="Wakamatsu A."/>
            <person name="Hayashi K."/>
            <person name="Sato H."/>
            <person name="Nagai K."/>
            <person name="Kimura K."/>
            <person name="Makita H."/>
            <person name="Sekine M."/>
            <person name="Obayashi M."/>
            <person name="Nishi T."/>
            <person name="Shibahara T."/>
            <person name="Tanaka T."/>
            <person name="Ishii S."/>
            <person name="Yamamoto J."/>
            <person name="Saito K."/>
            <person name="Kawai Y."/>
            <person name="Isono Y."/>
            <person name="Nakamura Y."/>
            <person name="Nagahari K."/>
            <person name="Murakami K."/>
            <person name="Yasuda T."/>
            <person name="Iwayanagi T."/>
            <person name="Wagatsuma M."/>
            <person name="Shiratori A."/>
            <person name="Sudo H."/>
            <person name="Hosoiri T."/>
            <person name="Kaku Y."/>
            <person name="Kodaira H."/>
            <person name="Kondo H."/>
            <person name="Sugawara M."/>
            <person name="Takahashi M."/>
            <person name="Kanda K."/>
            <person name="Yokoi T."/>
            <person name="Furuya T."/>
            <person name="Kikkawa E."/>
            <person name="Omura Y."/>
            <person name="Abe K."/>
            <person name="Kamihara K."/>
            <person name="Katsuta N."/>
            <person name="Sato K."/>
            <person name="Tanikawa M."/>
            <person name="Yamazaki M."/>
            <person name="Ninomiya K."/>
            <person name="Ishibashi T."/>
            <person name="Yamashita H."/>
            <person name="Murakawa K."/>
            <person name="Fujimori K."/>
            <person name="Tanai H."/>
            <person name="Kimata M."/>
            <person name="Watanabe M."/>
            <person name="Hiraoka S."/>
            <person name="Chiba Y."/>
            <person name="Ishida S."/>
            <person name="Ono Y."/>
            <person name="Takiguchi S."/>
            <person name="Watanabe S."/>
            <person name="Yosida M."/>
            <person name="Hotuta T."/>
            <person name="Kusano J."/>
            <person name="Kanehori K."/>
            <person name="Takahashi-Fujii A."/>
            <person name="Hara H."/>
            <person name="Tanase T.-O."/>
            <person name="Nomura Y."/>
            <person name="Togiya S."/>
            <person name="Komai F."/>
            <person name="Hara R."/>
            <person name="Takeuchi K."/>
            <person name="Arita M."/>
            <person name="Imose N."/>
            <person name="Musashino K."/>
            <person name="Yuuki H."/>
            <person name="Oshima A."/>
            <person name="Sasaki N."/>
            <person name="Aotsuka S."/>
            <person name="Yoshikawa Y."/>
            <person name="Matsunawa H."/>
            <person name="Ichihara T."/>
            <person name="Shiohata N."/>
            <person name="Sano S."/>
            <person name="Moriya S."/>
            <person name="Momiyama H."/>
            <person name="Satoh N."/>
            <person name="Takami S."/>
            <person name="Terashima Y."/>
            <person name="Suzuki O."/>
            <person name="Nakagawa S."/>
            <person name="Senoh A."/>
            <person name="Mizoguchi H."/>
            <person name="Goto Y."/>
            <person name="Shimizu F."/>
            <person name="Wakebe H."/>
            <person name="Hishigaki H."/>
            <person name="Watanabe T."/>
            <person name="Sugiyama A."/>
            <person name="Takemoto M."/>
            <person name="Kawakami B."/>
            <person name="Yamazaki M."/>
            <person name="Watanabe K."/>
            <person name="Kumagai A."/>
            <person name="Itakura S."/>
            <person name="Fukuzumi Y."/>
            <person name="Fujimori Y."/>
            <person name="Komiyama M."/>
            <person name="Tashiro H."/>
            <person name="Tanigami A."/>
            <person name="Fujiwara T."/>
            <person name="Ono T."/>
            <person name="Yamada K."/>
            <person name="Fujii Y."/>
            <person name="Ozaki K."/>
            <person name="Hirao M."/>
            <person name="Ohmori Y."/>
            <person name="Kawabata A."/>
            <person name="Hikiji T."/>
            <person name="Kobatake N."/>
            <person name="Inagaki H."/>
            <person name="Ikema Y."/>
            <person name="Okamoto S."/>
            <person name="Okitani R."/>
            <person name="Kawakami T."/>
            <person name="Noguchi S."/>
            <person name="Itoh T."/>
            <person name="Shigeta K."/>
            <person name="Senba T."/>
            <person name="Matsumura K."/>
            <person name="Nakajima Y."/>
            <person name="Mizuno T."/>
            <person name="Morinaga M."/>
            <person name="Sasaki M."/>
            <person name="Togashi T."/>
            <person name="Oyama M."/>
            <person name="Hata H."/>
            <person name="Watanabe M."/>
            <person name="Komatsu T."/>
            <person name="Mizushima-Sugano J."/>
            <person name="Satoh T."/>
            <person name="Shirai Y."/>
            <person name="Takahashi Y."/>
            <person name="Nakagawa K."/>
            <person name="Okumura K."/>
            <person name="Nagase T."/>
            <person name="Nomura N."/>
            <person name="Kikuchi H."/>
            <person name="Masuho Y."/>
            <person name="Yamashita R."/>
            <person name="Nakai K."/>
            <person name="Yada T."/>
            <person name="Nakamura Y."/>
            <person name="Ohara O."/>
            <person name="Isogai T."/>
            <person name="Sugano S."/>
        </authorList>
    </citation>
    <scope>NUCLEOTIDE SEQUENCE [LARGE SCALE MRNA] (ISOFORM 1)</scope>
</reference>
<reference key="6">
    <citation type="journal article" date="2005" name="Nature">
        <title>Generation and annotation of the DNA sequences of human chromosomes 2 and 4.</title>
        <authorList>
            <person name="Hillier L.W."/>
            <person name="Graves T.A."/>
            <person name="Fulton R.S."/>
            <person name="Fulton L.A."/>
            <person name="Pepin K.H."/>
            <person name="Minx P."/>
            <person name="Wagner-McPherson C."/>
            <person name="Layman D."/>
            <person name="Wylie K."/>
            <person name="Sekhon M."/>
            <person name="Becker M.C."/>
            <person name="Fewell G.A."/>
            <person name="Delehaunty K.D."/>
            <person name="Miner T.L."/>
            <person name="Nash W.E."/>
            <person name="Kremitzki C."/>
            <person name="Oddy L."/>
            <person name="Du H."/>
            <person name="Sun H."/>
            <person name="Bradshaw-Cordum H."/>
            <person name="Ali J."/>
            <person name="Carter J."/>
            <person name="Cordes M."/>
            <person name="Harris A."/>
            <person name="Isak A."/>
            <person name="van Brunt A."/>
            <person name="Nguyen C."/>
            <person name="Du F."/>
            <person name="Courtney L."/>
            <person name="Kalicki J."/>
            <person name="Ozersky P."/>
            <person name="Abbott S."/>
            <person name="Armstrong J."/>
            <person name="Belter E.A."/>
            <person name="Caruso L."/>
            <person name="Cedroni M."/>
            <person name="Cotton M."/>
            <person name="Davidson T."/>
            <person name="Desai A."/>
            <person name="Elliott G."/>
            <person name="Erb T."/>
            <person name="Fronick C."/>
            <person name="Gaige T."/>
            <person name="Haakenson W."/>
            <person name="Haglund K."/>
            <person name="Holmes A."/>
            <person name="Harkins R."/>
            <person name="Kim K."/>
            <person name="Kruchowski S.S."/>
            <person name="Strong C.M."/>
            <person name="Grewal N."/>
            <person name="Goyea E."/>
            <person name="Hou S."/>
            <person name="Levy A."/>
            <person name="Martinka S."/>
            <person name="Mead K."/>
            <person name="McLellan M.D."/>
            <person name="Meyer R."/>
            <person name="Randall-Maher J."/>
            <person name="Tomlinson C."/>
            <person name="Dauphin-Kohlberg S."/>
            <person name="Kozlowicz-Reilly A."/>
            <person name="Shah N."/>
            <person name="Swearengen-Shahid S."/>
            <person name="Snider J."/>
            <person name="Strong J.T."/>
            <person name="Thompson J."/>
            <person name="Yoakum M."/>
            <person name="Leonard S."/>
            <person name="Pearman C."/>
            <person name="Trani L."/>
            <person name="Radionenko M."/>
            <person name="Waligorski J.E."/>
            <person name="Wang C."/>
            <person name="Rock S.M."/>
            <person name="Tin-Wollam A.-M."/>
            <person name="Maupin R."/>
            <person name="Latreille P."/>
            <person name="Wendl M.C."/>
            <person name="Yang S.-P."/>
            <person name="Pohl C."/>
            <person name="Wallis J.W."/>
            <person name="Spieth J."/>
            <person name="Bieri T.A."/>
            <person name="Berkowicz N."/>
            <person name="Nelson J.O."/>
            <person name="Osborne J."/>
            <person name="Ding L."/>
            <person name="Meyer R."/>
            <person name="Sabo A."/>
            <person name="Shotland Y."/>
            <person name="Sinha P."/>
            <person name="Wohldmann P.E."/>
            <person name="Cook L.L."/>
            <person name="Hickenbotham M.T."/>
            <person name="Eldred J."/>
            <person name="Williams D."/>
            <person name="Jones T.A."/>
            <person name="She X."/>
            <person name="Ciccarelli F.D."/>
            <person name="Izaurralde E."/>
            <person name="Taylor J."/>
            <person name="Schmutz J."/>
            <person name="Myers R.M."/>
            <person name="Cox D.R."/>
            <person name="Huang X."/>
            <person name="McPherson J.D."/>
            <person name="Mardis E.R."/>
            <person name="Clifton S.W."/>
            <person name="Warren W.C."/>
            <person name="Chinwalla A.T."/>
            <person name="Eddy S.R."/>
            <person name="Marra M.A."/>
            <person name="Ovcharenko I."/>
            <person name="Furey T.S."/>
            <person name="Miller W."/>
            <person name="Eichler E.E."/>
            <person name="Bork P."/>
            <person name="Suyama M."/>
            <person name="Torrents D."/>
            <person name="Waterston R.H."/>
            <person name="Wilson R.K."/>
        </authorList>
    </citation>
    <scope>NUCLEOTIDE SEQUENCE [LARGE SCALE GENOMIC DNA]</scope>
</reference>
<reference key="7">
    <citation type="submission" date="2005-09" db="EMBL/GenBank/DDBJ databases">
        <authorList>
            <person name="Mural R.J."/>
            <person name="Istrail S."/>
            <person name="Sutton G.G."/>
            <person name="Florea L."/>
            <person name="Halpern A.L."/>
            <person name="Mobarry C.M."/>
            <person name="Lippert R."/>
            <person name="Walenz B."/>
            <person name="Shatkay H."/>
            <person name="Dew I."/>
            <person name="Miller J.R."/>
            <person name="Flanigan M.J."/>
            <person name="Edwards N.J."/>
            <person name="Bolanos R."/>
            <person name="Fasulo D."/>
            <person name="Halldorsson B.V."/>
            <person name="Hannenhalli S."/>
            <person name="Turner R."/>
            <person name="Yooseph S."/>
            <person name="Lu F."/>
            <person name="Nusskern D.R."/>
            <person name="Shue B.C."/>
            <person name="Zheng X.H."/>
            <person name="Zhong F."/>
            <person name="Delcher A.L."/>
            <person name="Huson D.H."/>
            <person name="Kravitz S.A."/>
            <person name="Mouchard L."/>
            <person name="Reinert K."/>
            <person name="Remington K.A."/>
            <person name="Clark A.G."/>
            <person name="Waterman M.S."/>
            <person name="Eichler E.E."/>
            <person name="Adams M.D."/>
            <person name="Hunkapiller M.W."/>
            <person name="Myers E.W."/>
            <person name="Venter J.C."/>
        </authorList>
    </citation>
    <scope>NUCLEOTIDE SEQUENCE [LARGE SCALE GENOMIC DNA]</scope>
</reference>
<reference key="8">
    <citation type="journal article" date="2004" name="Genome Res.">
        <title>The status, quality, and expansion of the NIH full-length cDNA project: the Mammalian Gene Collection (MGC).</title>
        <authorList>
            <consortium name="The MGC Project Team"/>
        </authorList>
    </citation>
    <scope>NUCLEOTIDE SEQUENCE [LARGE SCALE MRNA]</scope>
    <scope>VARIANT ARG-104</scope>
    <source>
        <tissue>Skin</tissue>
    </source>
</reference>
<reference key="9">
    <citation type="journal article" date="2003" name="Genome Res.">
        <title>The secreted protein discovery initiative (SPDI), a large-scale effort to identify novel human secreted and transmembrane proteins: a bioinformatics assessment.</title>
        <authorList>
            <person name="Clark H.F."/>
            <person name="Gurney A.L."/>
            <person name="Abaya E."/>
            <person name="Baker K."/>
            <person name="Baldwin D.T."/>
            <person name="Brush J."/>
            <person name="Chen J."/>
            <person name="Chow B."/>
            <person name="Chui C."/>
            <person name="Crowley C."/>
            <person name="Currell B."/>
            <person name="Deuel B."/>
            <person name="Dowd P."/>
            <person name="Eaton D."/>
            <person name="Foster J.S."/>
            <person name="Grimaldi C."/>
            <person name="Gu Q."/>
            <person name="Hass P.E."/>
            <person name="Heldens S."/>
            <person name="Huang A."/>
            <person name="Kim H.S."/>
            <person name="Klimowski L."/>
            <person name="Jin Y."/>
            <person name="Johnson S."/>
            <person name="Lee J."/>
            <person name="Lewis L."/>
            <person name="Liao D."/>
            <person name="Mark M.R."/>
            <person name="Robbie E."/>
            <person name="Sanchez C."/>
            <person name="Schoenfeld J."/>
            <person name="Seshagiri S."/>
            <person name="Simmons L."/>
            <person name="Singh J."/>
            <person name="Smith V."/>
            <person name="Stinson J."/>
            <person name="Vagts A."/>
            <person name="Vandlen R.L."/>
            <person name="Watanabe C."/>
            <person name="Wieand D."/>
            <person name="Woods K."/>
            <person name="Xie M.-H."/>
            <person name="Yansura D.G."/>
            <person name="Yi S."/>
            <person name="Yu G."/>
            <person name="Yuan J."/>
            <person name="Zhang M."/>
            <person name="Zhang Z."/>
            <person name="Goddard A.D."/>
            <person name="Wood W.I."/>
            <person name="Godowski P.J."/>
            <person name="Gray A.M."/>
        </authorList>
    </citation>
    <scope>NUCLEOTIDE SEQUENCE [LARGE SCALE MRNA] OF 5-418 (ISOFORM 1)</scope>
</reference>
<reference key="10">
    <citation type="journal article" date="2004" name="Nat. Genet.">
        <title>Infantile-onset symptomatic epilepsy syndrome caused by a homozygous loss-of-function mutation of GM3 synthase.</title>
        <authorList>
            <person name="Simpson M.A."/>
            <person name="Cross H."/>
            <person name="Proukakis C."/>
            <person name="Priestman D.A."/>
            <person name="Neville D.C.A."/>
            <person name="Reinkensmeier G."/>
            <person name="Wang H."/>
            <person name="Wiznitzer M."/>
            <person name="Gurtz K."/>
            <person name="Verganelaki A."/>
            <person name="Pryde A."/>
            <person name="Patton M.A."/>
            <person name="Dwek R.A."/>
            <person name="Butters T.D."/>
            <person name="Platt F.M."/>
            <person name="Crosby A.H."/>
        </authorList>
    </citation>
    <scope>INVOLVEMENT IN SPDRS</scope>
</reference>
<comment type="function">
    <text evidence="6 7">Transfers the sialyl group (N-acetyl-alpha-neuraminyl or NeuAc) from CMP-NeuAc to the non-reducing terminal galactose (Gal) of glycosphingolipids forming gangliosides (important molecules involved in the regulation of multiple cellular processes, including cell proliferation and differentiation, apoptosis, embryogenesis, development, and oncogenesis) (PubMed:16934889, PubMed:9822625). Mainly involved in the biosynthesis of ganglioside GM3 but can also use different glycolipids as substrate acceptors such as D-galactosylceramide (GalCer), asialo-GM2 (GA2) and asialo-GM1 (GA1), although less preferentially than beta-D-Gal-(1-&gt;4)-beta-D-Glc-(1&lt;-&gt;1)-Cer (LacCer) (PubMed:16934889).</text>
</comment>
<comment type="catalytic activity">
    <reaction evidence="6 7">
        <text>a beta-D-Gal-(1-&gt;4)-beta-D-Glc-(1&lt;-&gt;1)-Cer(d18:1(4E)) + CMP-N-acetyl-beta-neuraminate = a ganglioside GM3 (d18:1(4E)) + CMP + H(+)</text>
        <dbReference type="Rhea" id="RHEA:18417"/>
        <dbReference type="ChEBI" id="CHEBI:15378"/>
        <dbReference type="ChEBI" id="CHEBI:17950"/>
        <dbReference type="ChEBI" id="CHEBI:57812"/>
        <dbReference type="ChEBI" id="CHEBI:60065"/>
        <dbReference type="ChEBI" id="CHEBI:60377"/>
        <dbReference type="EC" id="2.4.3.9"/>
    </reaction>
    <physiologicalReaction direction="left-to-right" evidence="13 14">
        <dbReference type="Rhea" id="RHEA:18418"/>
    </physiologicalReaction>
</comment>
<comment type="catalytic activity">
    <molecule>Isoform 3</molecule>
    <reaction evidence="6">
        <text>ganglioside GA2 (d18:1(4E)/18:0) + CMP-N-acetyl-beta-neuraminate = ganglioside GM2 (d18:1(4E)/18:0) + CMP + H(+)</text>
        <dbReference type="Rhea" id="RHEA:41776"/>
        <dbReference type="ChEBI" id="CHEBI:15378"/>
        <dbReference type="ChEBI" id="CHEBI:57812"/>
        <dbReference type="ChEBI" id="CHEBI:60377"/>
        <dbReference type="ChEBI" id="CHEBI:78485"/>
        <dbReference type="ChEBI" id="CHEBI:78486"/>
    </reaction>
    <physiologicalReaction direction="left-to-right" evidence="13">
        <dbReference type="Rhea" id="RHEA:41777"/>
    </physiologicalReaction>
</comment>
<comment type="catalytic activity">
    <molecule>Isoform 3</molecule>
    <reaction evidence="6">
        <text>a beta-D-Gal-(1&lt;-&gt;1')-ceramide + CMP-N-acetyl-beta-neuraminate = N-acetyl-alpha-neuraminosyl-(2-&gt;3)-beta-D-galactosyl-(1&lt;-&gt;1')-ceramide + CMP + H(+)</text>
        <dbReference type="Rhea" id="RHEA:41780"/>
        <dbReference type="ChEBI" id="CHEBI:15378"/>
        <dbReference type="ChEBI" id="CHEBI:57812"/>
        <dbReference type="ChEBI" id="CHEBI:60377"/>
        <dbReference type="ChEBI" id="CHEBI:82643"/>
        <dbReference type="ChEBI" id="CHEBI:143593"/>
    </reaction>
    <physiologicalReaction direction="left-to-right" evidence="13">
        <dbReference type="Rhea" id="RHEA:41781"/>
    </physiologicalReaction>
</comment>
<comment type="catalytic activity">
    <molecule>Isoform 3</molecule>
    <reaction evidence="13">
        <text>a beta-D-galactosyl-(1&lt;-&gt;1')-N-acylsphing-4-enine + CMP-N-acetyl-beta-neuraminate = a ganglioside GM4 (d18:1(4E)) + CMP + H(+)</text>
        <dbReference type="Rhea" id="RHEA:47600"/>
        <dbReference type="ChEBI" id="CHEBI:15378"/>
        <dbReference type="ChEBI" id="CHEBI:18390"/>
        <dbReference type="ChEBI" id="CHEBI:57812"/>
        <dbReference type="ChEBI" id="CHEBI:60377"/>
        <dbReference type="ChEBI" id="CHEBI:78482"/>
    </reaction>
    <physiologicalReaction direction="left-to-right" evidence="13">
        <dbReference type="Rhea" id="RHEA:47601"/>
    </physiologicalReaction>
</comment>
<comment type="catalytic activity">
    <molecule>Isoform 3</molecule>
    <reaction evidence="6">
        <text>ganglioside GA1 (d18:1(4E)/18:0) + CMP-N-acetyl-beta-neuraminate = ganglioside GM1 (d18:1(4E)/18:0) + CMP + H(+)</text>
        <dbReference type="Rhea" id="RHEA:41784"/>
        <dbReference type="ChEBI" id="CHEBI:15378"/>
        <dbReference type="ChEBI" id="CHEBI:57812"/>
        <dbReference type="ChEBI" id="CHEBI:60377"/>
        <dbReference type="ChEBI" id="CHEBI:73110"/>
        <dbReference type="ChEBI" id="CHEBI:78484"/>
    </reaction>
    <physiologicalReaction direction="left-to-right" evidence="13">
        <dbReference type="Rhea" id="RHEA:41785"/>
    </physiologicalReaction>
</comment>
<comment type="pathway">
    <text evidence="13 14">Glycolipid biosynthesis.</text>
</comment>
<comment type="subcellular location">
    <subcellularLocation>
        <location evidence="12">Golgi apparatus membrane</location>
        <topology evidence="12">Single-pass type II membrane protein</topology>
    </subcellularLocation>
</comment>
<comment type="alternative products">
    <event type="alternative splicing"/>
    <isoform>
        <id>Q9UNP4-1</id>
        <name>1</name>
        <sequence type="displayed"/>
    </isoform>
    <isoform>
        <id>Q9UNP4-2</id>
        <name>2</name>
        <sequence type="described" ref="VSP_033686"/>
    </isoform>
    <isoform>
        <id>Q9UNP4-3</id>
        <name>3</name>
        <sequence type="described" ref="VSP_033687 VSP_033688"/>
    </isoform>
</comment>
<comment type="tissue specificity">
    <text evidence="7">Ubiquitous. High expression in brain, skeletal muscle, placenta, and testis. mRNA widely distributed in human brain, but slightly elevated expression was observed in the cerebral cortex, temporal lobe, and putamen.</text>
</comment>
<comment type="PTM">
    <text evidence="6">N-glycosylated.</text>
</comment>
<comment type="disease" evidence="5">
    <disease id="DI-00096">
        <name>Salt and pepper developmental regression syndrome</name>
        <acronym>SPDRS</acronym>
        <description>A rare autosomal recessive disorder characterized by infantile onset of severe, recurrent and refractory seizures, failure to thrive, psychomotor delay, developmental stagnation, and cortical blindness. Deafness is observed in some patients. Affected individuals have patches of skin hypo- or hyperpigmentation on the trunk, face, and extremities.</description>
        <dbReference type="MIM" id="609056"/>
    </disease>
    <text>The disease is caused by variants affecting the gene represented in this entry.</text>
</comment>
<comment type="similarity">
    <text evidence="12">Belongs to the glycosyltransferase 29 family.</text>
</comment>
<comment type="sequence caution" evidence="12">
    <conflict type="erroneous initiation">
        <sequence resource="EMBL-CDS" id="AAD14634"/>
    </conflict>
</comment>
<comment type="sequence caution" evidence="12">
    <conflict type="erroneous initiation">
        <sequence resource="EMBL-CDS" id="AAF66146"/>
    </conflict>
</comment>
<comment type="sequence caution" evidence="12">
    <conflict type="erroneous initiation">
        <sequence resource="EMBL-CDS" id="AAQ89463"/>
    </conflict>
</comment>
<comment type="sequence caution" evidence="12">
    <conflict type="erroneous gene model prediction">
        <sequence resource="EMBL-CDS" id="AAY24147"/>
    </conflict>
</comment>
<comment type="sequence caution" evidence="12">
    <conflict type="erroneous initiation">
        <sequence resource="EMBL-CDS" id="BAA33950"/>
    </conflict>
</comment>
<comment type="online information" name="Functional Glycomics Gateway - GTase">
    <link uri="http://www.functionalglycomics.org/glycomics/molecule/jsp/glycoEnzyme/viewGlycoEnzyme.jsp?gbpId=gt_hum_626"/>
    <text>ST3Gal V</text>
</comment>
<sequence>MRTKAAGCAERRPLQPRTEAAAAPAGRAMPSEYTYVKLRSDCSRPSLQWYTRAQSKMRRPSLLLKDILKCTLLVFGVWILYILKLNYTTEECDMKKMHYVDPDHVKRAQKYAQQVLQKECRPKFAKTSMALLFEHRYSVDLLPFVQKAPKDSEAESKYDPPFGFRKFSSKVQTLLELLPEHDLPEHLKAKTCRRCVVIGSGGILHGLELGHTLNQFDVVIRLNSAPVEGYSEHVGNKTTIRMTYPEGAPLSDLEYYSNDLFVAVLFKSVDFNWLQAMVKKETLPFWVRLFFWKQVAEKIPLQPKHFRILNPVIIKETAFDILQYSEPQSRFWGRDKNVPTIGVIAVVLATHLCDEVSLAGFGYDLNQPRTPLHYFDSQCMAAMNFQTMHNVTTETKFLLKLVKEGVVKDLSGGIDREF</sequence>
<accession>Q9UNP4</accession>
<accession>B3KM82</accession>
<accession>D6W5L9</accession>
<accession>O94902</accession>
<accession>Q53QU1</accession>
<accession>Q6NZX4</accession>
<accession>Q6YFL1</accession>
<name>SIAT9_HUMAN</name>
<gene>
    <name type="primary">ST3GAL5</name>
    <name type="synonym">SIAT9</name>
    <name type="ORF">UNQ2510/PRO5998</name>
</gene>